<sequence>CFLWHVRKRVADQELGDAPFLDRLRRDQKSLRGRGSTLGLDIKTATRAGKQIVERILKEESDEALKMTMASVPASRYLTDMTLEEMSRDW</sequence>
<keyword id="KW-0025">Alternative splicing</keyword>
<keyword id="KW-1262">Eukaryotic host gene expression shutoff by virus</keyword>
<keyword id="KW-1035">Host cytoplasm</keyword>
<keyword id="KW-1190">Host gene expression shutoff by virus</keyword>
<keyword id="KW-1192">Host mRNA suppression by virus</keyword>
<keyword id="KW-1048">Host nucleus</keyword>
<keyword id="KW-0945">Host-virus interaction</keyword>
<keyword id="KW-1090">Inhibition of host innate immune response by virus</keyword>
<keyword id="KW-1103">Inhibition of host pre-mRNA processing by virus</keyword>
<keyword id="KW-0922">Interferon antiviral system evasion</keyword>
<keyword id="KW-1017">Isopeptide bond</keyword>
<keyword id="KW-0694">RNA-binding</keyword>
<keyword id="KW-0832">Ubl conjugation</keyword>
<keyword id="KW-0899">Viral immunoevasion</keyword>
<feature type="chain" id="PRO_0000078919" description="Non-structural protein 1">
    <location>
        <begin position="1" status="less than"/>
        <end position="90" status="greater than"/>
    </location>
</feature>
<feature type="region of interest" description="RNA-binding and homodimerization" evidence="1">
    <location>
        <begin position="1" status="less than"/>
        <end position="61"/>
    </location>
</feature>
<feature type="short sequence motif" description="Nuclear localization signal" evidence="1">
    <location>
        <begin position="22"/>
        <end position="26"/>
    </location>
</feature>
<feature type="cross-link" description="Glycyl lysine isopeptide (Lys-Gly) (interchain with G-Cter in ISG15); in band I form; by host" evidence="1">
    <location>
        <position position="8"/>
    </location>
</feature>
<feature type="cross-link" description="Glycyl lysine isopeptide (Lys-Gly) (interchain with G-Cter in ISG15); in band I form; by host" evidence="1">
    <location>
        <position position="29"/>
    </location>
</feature>
<feature type="non-terminal residue">
    <location>
        <position position="1"/>
    </location>
</feature>
<feature type="non-terminal residue">
    <location>
        <position position="90"/>
    </location>
</feature>
<organism>
    <name type="scientific">Influenza A virus (strain A/Camel/Mongolia/1982 H1N1)</name>
    <dbReference type="NCBI Taxonomy" id="387191"/>
    <lineage>
        <taxon>Viruses</taxon>
        <taxon>Riboviria</taxon>
        <taxon>Orthornavirae</taxon>
        <taxon>Negarnaviricota</taxon>
        <taxon>Polyploviricotina</taxon>
        <taxon>Insthoviricetes</taxon>
        <taxon>Articulavirales</taxon>
        <taxon>Orthomyxoviridae</taxon>
        <taxon>Alphainfluenzavirus</taxon>
        <taxon>Alphainfluenzavirus influenzae</taxon>
        <taxon>Influenza A virus</taxon>
    </lineage>
</organism>
<organismHost>
    <name type="scientific">Aves</name>
    <dbReference type="NCBI Taxonomy" id="8782"/>
</organismHost>
<organismHost>
    <name type="scientific">Homo sapiens</name>
    <name type="common">Human</name>
    <dbReference type="NCBI Taxonomy" id="9606"/>
</organismHost>
<organismHost>
    <name type="scientific">Sus scrofa</name>
    <name type="common">Pig</name>
    <dbReference type="NCBI Taxonomy" id="9823"/>
</organismHost>
<reference key="1">
    <citation type="journal article" date="1993" name="Virology">
        <title>A reassortant H1N1 influenza A virus caused fatal epizootics among camels in Mongolia.</title>
        <authorList>
            <person name="Yamnikova S.S."/>
            <person name="Mandler J."/>
            <person name="Bekh-Ochir Z.H."/>
            <person name="Dachtzeren P."/>
            <person name="Ludwig S."/>
            <person name="Lvov D.K."/>
            <person name="Scholtissek C."/>
        </authorList>
    </citation>
    <scope>NUCLEOTIDE SEQUENCE [MRNA]</scope>
</reference>
<reference key="2">
    <citation type="journal article" date="2003" name="Virology">
        <title>Intracellular warfare between human influenza viruses and human cells: the roles of the viral NS1 protein.</title>
        <authorList>
            <person name="Krug R.M."/>
            <person name="Yuan W."/>
            <person name="Noah D.L."/>
            <person name="Latham A.G."/>
        </authorList>
    </citation>
    <scope>REVIEW</scope>
</reference>
<protein>
    <recommendedName>
        <fullName>Non-structural protein 1</fullName>
        <shortName>NS1</shortName>
    </recommendedName>
    <alternativeName>
        <fullName>NS1A</fullName>
    </alternativeName>
</protein>
<proteinExistence type="evidence at transcript level"/>
<dbReference type="EMBL" id="M73977">
    <property type="protein sequence ID" value="AAA16908.2"/>
    <property type="molecule type" value="mRNA"/>
</dbReference>
<dbReference type="SMR" id="P26148"/>
<dbReference type="GO" id="GO:0030430">
    <property type="term" value="C:host cell cytoplasm"/>
    <property type="evidence" value="ECO:0007669"/>
    <property type="project" value="UniProtKB-SubCell"/>
</dbReference>
<dbReference type="GO" id="GO:0042025">
    <property type="term" value="C:host cell nucleus"/>
    <property type="evidence" value="ECO:0007669"/>
    <property type="project" value="UniProtKB-SubCell"/>
</dbReference>
<dbReference type="GO" id="GO:0003723">
    <property type="term" value="F:RNA binding"/>
    <property type="evidence" value="ECO:0007669"/>
    <property type="project" value="UniProtKB-KW"/>
</dbReference>
<dbReference type="GO" id="GO:0039657">
    <property type="term" value="P:symbiont-mediated suppression of host gene expression"/>
    <property type="evidence" value="ECO:0007669"/>
    <property type="project" value="UniProtKB-KW"/>
</dbReference>
<dbReference type="GO" id="GO:0052170">
    <property type="term" value="P:symbiont-mediated suppression of host innate immune response"/>
    <property type="evidence" value="ECO:0007669"/>
    <property type="project" value="UniProtKB-KW"/>
</dbReference>
<dbReference type="GO" id="GO:0039524">
    <property type="term" value="P:symbiont-mediated suppression of host mRNA processing"/>
    <property type="evidence" value="ECO:0007669"/>
    <property type="project" value="UniProtKB-KW"/>
</dbReference>
<dbReference type="Gene3D" id="3.30.420.330">
    <property type="entry name" value="Influenza virus non-structural protein, effector domain"/>
    <property type="match status" value="1"/>
</dbReference>
<dbReference type="Gene3D" id="1.10.287.10">
    <property type="entry name" value="S15/NS1, RNA-binding"/>
    <property type="match status" value="1"/>
</dbReference>
<dbReference type="InterPro" id="IPR000256">
    <property type="entry name" value="NS1A"/>
</dbReference>
<dbReference type="InterPro" id="IPR038064">
    <property type="entry name" value="NS1A_effect_dom-like_sf"/>
</dbReference>
<dbReference type="InterPro" id="IPR009068">
    <property type="entry name" value="uS15_NS1_RNA-bd_sf"/>
</dbReference>
<dbReference type="Pfam" id="PF00600">
    <property type="entry name" value="Flu_NS1"/>
    <property type="match status" value="1"/>
</dbReference>
<dbReference type="SUPFAM" id="SSF143021">
    <property type="entry name" value="Ns1 effector domain-like"/>
    <property type="match status" value="1"/>
</dbReference>
<dbReference type="SUPFAM" id="SSF47060">
    <property type="entry name" value="S15/NS1 RNA-binding domain"/>
    <property type="match status" value="1"/>
</dbReference>
<name>NS1_I82A2</name>
<accession>P26148</accession>
<evidence type="ECO:0000250" key="1"/>
<evidence type="ECO:0000250" key="2">
    <source>
        <dbReference type="UniProtKB" id="P03495"/>
    </source>
</evidence>
<evidence type="ECO:0000305" key="3"/>
<gene>
    <name type="primary">NS</name>
</gene>
<comment type="function">
    <text evidence="2">Inhibits post-transcriptional processing of cellular pre-mRNA, by binding and inhibiting two cellular proteins that are required for the 3'-end processing of cellular pre-mRNAs: the 30 kDa cleavage and polyadenylation specificity factor (CPSF4) and the poly(A)-binding protein 2 (PABPN1). This results in the accumulation of unprocessed 3' end pre-mRNAs which can't be exported from the nucleus. Cellular protein synthesis is thereby shut off very early after virus infection. Viral protein synthesis is not affected by the inhibition of the cellular 3' end processing machinery because the poly(A) tails of viral mRNAs are produced by the viral polymerase through a stuttering mechanism. Prevents the establishment of the cellular antiviral state by inhibiting TRIM25-mediated RIGI ubiquitination, which normally triggers the antiviral transduction signal that leads to the activation of type I IFN genes by transcription factors IRF3 and IRF7. Also binds poly(A) and U6 snRNA. Inhibits the integrated stress response (ISR) in the infected cell by blocking dsRNA binding by EIF2AK2/PKR and further phosphorylation of EIF2S1/EIF-2ALPHA. Stress granule formation is thus inhibited, which allows protein synthesis and viral replication.</text>
</comment>
<comment type="subunit">
    <text evidence="1">Homodimer. Interacts with host TRIM25 (via coiled coil); this interaction specifically inhibits TRIM25 multimerization and TRIM25-mediated RIGI CARD ubiquitination. Interacts with human EIF2AK2/PKR, CPSF4, IVNS1ABP and PABPN1 (By similarity).</text>
</comment>
<comment type="subcellular location">
    <subcellularLocation>
        <location>Host nucleus</location>
    </subcellularLocation>
    <subcellularLocation>
        <location>Host cytoplasm</location>
    </subcellularLocation>
    <text evidence="1">In uninfected, transfected cells, NS1 is localized in the nucleus. Only in virus infected cells, the nuclear export signal is unveiled, presumably by a viral protein, and a fraction of NS1 is exported in the cytoplasm (By similarity).</text>
</comment>
<comment type="alternative products">
    <event type="alternative splicing"/>
    <isoform>
        <id>P26148-1</id>
        <name>NS1</name>
        <sequence type="displayed"/>
    </isoform>
    <isoform>
        <id>P26148-2</id>
        <name>NEP</name>
        <name>NS2</name>
        <sequence type="not described"/>
    </isoform>
</comment>
<comment type="domain">
    <text evidence="1">The dsRNA-binding region is required for suppression of RNA silencing.</text>
</comment>
<comment type="PTM">
    <text evidence="1">Upon interferon induction, ISGylated via host HERC5; this results in the impairment of NS1 interaction with RNA targets due to its inability to form homodimers and to interact with host EIF2AK2/PKR. There are two ISGylated forms (By similarity).</text>
</comment>
<comment type="similarity">
    <text evidence="3">Belongs to the influenza A viruses NS1 family.</text>
</comment>